<gene>
    <name evidence="1" type="primary">fmt</name>
    <name type="ordered locus">Spy49_1261c</name>
</gene>
<sequence length="311" mass="33684">MIKLLFMGTPQFSATVLKGLLDNPAYEILGVVTQPDRAVGRKKDIKVTPVKQLALEHGISIYQPEKLSGSQELIEIMGLGADGIITAAFGQFLPTILLDSVSFAINVHASLLPKYRGGAPIHYAIMNGDKEAGVTIMEMIKEMDAGDMVAKASTPILETDNVGTLFEKLAIIGRDLLLDSLPAYLSGELKPIPQDHSQATFSPNISPEHEKLDWTMSNQEVFNHIRGMNPWPVAHTFLEGQRLKIYEAQLAEGEGLPGQVIVKTKKSLVIATGQGALSLIVVQPAGKPKMSIIDFLNGIGRKLEVGDIIGR</sequence>
<reference key="1">
    <citation type="journal article" date="2008" name="J. Bacteriol.">
        <title>Genome sequence of a nephritogenic and highly transformable M49 strain of Streptococcus pyogenes.</title>
        <authorList>
            <person name="McShan W.M."/>
            <person name="Ferretti J.J."/>
            <person name="Karasawa T."/>
            <person name="Suvorov A.N."/>
            <person name="Lin S."/>
            <person name="Qin B."/>
            <person name="Jia H."/>
            <person name="Kenton S."/>
            <person name="Najar F."/>
            <person name="Wu H."/>
            <person name="Scott J."/>
            <person name="Roe B.A."/>
            <person name="Savic D.J."/>
        </authorList>
    </citation>
    <scope>NUCLEOTIDE SEQUENCE [LARGE SCALE GENOMIC DNA]</scope>
    <source>
        <strain>NZ131</strain>
    </source>
</reference>
<keyword id="KW-0648">Protein biosynthesis</keyword>
<keyword id="KW-0808">Transferase</keyword>
<proteinExistence type="inferred from homology"/>
<organism>
    <name type="scientific">Streptococcus pyogenes serotype M49 (strain NZ131)</name>
    <dbReference type="NCBI Taxonomy" id="471876"/>
    <lineage>
        <taxon>Bacteria</taxon>
        <taxon>Bacillati</taxon>
        <taxon>Bacillota</taxon>
        <taxon>Bacilli</taxon>
        <taxon>Lactobacillales</taxon>
        <taxon>Streptococcaceae</taxon>
        <taxon>Streptococcus</taxon>
    </lineage>
</organism>
<dbReference type="EC" id="2.1.2.9" evidence="1"/>
<dbReference type="EMBL" id="CP000829">
    <property type="protein sequence ID" value="ACI61545.1"/>
    <property type="molecule type" value="Genomic_DNA"/>
</dbReference>
<dbReference type="SMR" id="B5XMI3"/>
<dbReference type="KEGG" id="soz:Spy49_1261c"/>
<dbReference type="HOGENOM" id="CLU_033347_1_1_9"/>
<dbReference type="Proteomes" id="UP000001039">
    <property type="component" value="Chromosome"/>
</dbReference>
<dbReference type="GO" id="GO:0005829">
    <property type="term" value="C:cytosol"/>
    <property type="evidence" value="ECO:0007669"/>
    <property type="project" value="TreeGrafter"/>
</dbReference>
<dbReference type="GO" id="GO:0004479">
    <property type="term" value="F:methionyl-tRNA formyltransferase activity"/>
    <property type="evidence" value="ECO:0007669"/>
    <property type="project" value="UniProtKB-UniRule"/>
</dbReference>
<dbReference type="CDD" id="cd08646">
    <property type="entry name" value="FMT_core_Met-tRNA-FMT_N"/>
    <property type="match status" value="1"/>
</dbReference>
<dbReference type="CDD" id="cd08704">
    <property type="entry name" value="Met_tRNA_FMT_C"/>
    <property type="match status" value="1"/>
</dbReference>
<dbReference type="FunFam" id="3.40.50.170:FF:000004">
    <property type="entry name" value="Methionyl-tRNA formyltransferase"/>
    <property type="match status" value="1"/>
</dbReference>
<dbReference type="Gene3D" id="3.10.25.10">
    <property type="entry name" value="Formyl transferase, C-terminal domain"/>
    <property type="match status" value="1"/>
</dbReference>
<dbReference type="Gene3D" id="3.40.50.170">
    <property type="entry name" value="Formyl transferase, N-terminal domain"/>
    <property type="match status" value="1"/>
</dbReference>
<dbReference type="HAMAP" id="MF_00182">
    <property type="entry name" value="Formyl_trans"/>
    <property type="match status" value="1"/>
</dbReference>
<dbReference type="InterPro" id="IPR005794">
    <property type="entry name" value="Fmt"/>
</dbReference>
<dbReference type="InterPro" id="IPR005793">
    <property type="entry name" value="Formyl_trans_C"/>
</dbReference>
<dbReference type="InterPro" id="IPR037022">
    <property type="entry name" value="Formyl_trans_C_sf"/>
</dbReference>
<dbReference type="InterPro" id="IPR002376">
    <property type="entry name" value="Formyl_transf_N"/>
</dbReference>
<dbReference type="InterPro" id="IPR036477">
    <property type="entry name" value="Formyl_transf_N_sf"/>
</dbReference>
<dbReference type="InterPro" id="IPR011034">
    <property type="entry name" value="Formyl_transferase-like_C_sf"/>
</dbReference>
<dbReference type="InterPro" id="IPR001555">
    <property type="entry name" value="GART_AS"/>
</dbReference>
<dbReference type="InterPro" id="IPR044135">
    <property type="entry name" value="Met-tRNA-FMT_C"/>
</dbReference>
<dbReference type="InterPro" id="IPR041711">
    <property type="entry name" value="Met-tRNA-FMT_N"/>
</dbReference>
<dbReference type="NCBIfam" id="TIGR00460">
    <property type="entry name" value="fmt"/>
    <property type="match status" value="1"/>
</dbReference>
<dbReference type="PANTHER" id="PTHR11138">
    <property type="entry name" value="METHIONYL-TRNA FORMYLTRANSFERASE"/>
    <property type="match status" value="1"/>
</dbReference>
<dbReference type="PANTHER" id="PTHR11138:SF5">
    <property type="entry name" value="METHIONYL-TRNA FORMYLTRANSFERASE, MITOCHONDRIAL"/>
    <property type="match status" value="1"/>
</dbReference>
<dbReference type="Pfam" id="PF02911">
    <property type="entry name" value="Formyl_trans_C"/>
    <property type="match status" value="1"/>
</dbReference>
<dbReference type="Pfam" id="PF00551">
    <property type="entry name" value="Formyl_trans_N"/>
    <property type="match status" value="1"/>
</dbReference>
<dbReference type="SUPFAM" id="SSF50486">
    <property type="entry name" value="FMT C-terminal domain-like"/>
    <property type="match status" value="1"/>
</dbReference>
<dbReference type="SUPFAM" id="SSF53328">
    <property type="entry name" value="Formyltransferase"/>
    <property type="match status" value="1"/>
</dbReference>
<dbReference type="PROSITE" id="PS00373">
    <property type="entry name" value="GART"/>
    <property type="match status" value="1"/>
</dbReference>
<protein>
    <recommendedName>
        <fullName evidence="1">Methionyl-tRNA formyltransferase</fullName>
        <ecNumber evidence="1">2.1.2.9</ecNumber>
    </recommendedName>
</protein>
<feature type="chain" id="PRO_1000098451" description="Methionyl-tRNA formyltransferase">
    <location>
        <begin position="1"/>
        <end position="311"/>
    </location>
</feature>
<feature type="binding site" evidence="1">
    <location>
        <begin position="110"/>
        <end position="113"/>
    </location>
    <ligand>
        <name>(6S)-5,6,7,8-tetrahydrofolate</name>
        <dbReference type="ChEBI" id="CHEBI:57453"/>
    </ligand>
</feature>
<accession>B5XMI3</accession>
<name>FMT_STRPZ</name>
<comment type="function">
    <text evidence="1">Attaches a formyl group to the free amino group of methionyl-tRNA(fMet). The formyl group appears to play a dual role in the initiator identity of N-formylmethionyl-tRNA by promoting its recognition by IF2 and preventing the misappropriation of this tRNA by the elongation apparatus.</text>
</comment>
<comment type="catalytic activity">
    <reaction evidence="1">
        <text>L-methionyl-tRNA(fMet) + (6R)-10-formyltetrahydrofolate = N-formyl-L-methionyl-tRNA(fMet) + (6S)-5,6,7,8-tetrahydrofolate + H(+)</text>
        <dbReference type="Rhea" id="RHEA:24380"/>
        <dbReference type="Rhea" id="RHEA-COMP:9952"/>
        <dbReference type="Rhea" id="RHEA-COMP:9953"/>
        <dbReference type="ChEBI" id="CHEBI:15378"/>
        <dbReference type="ChEBI" id="CHEBI:57453"/>
        <dbReference type="ChEBI" id="CHEBI:78530"/>
        <dbReference type="ChEBI" id="CHEBI:78844"/>
        <dbReference type="ChEBI" id="CHEBI:195366"/>
        <dbReference type="EC" id="2.1.2.9"/>
    </reaction>
</comment>
<comment type="similarity">
    <text evidence="1">Belongs to the Fmt family.</text>
</comment>
<evidence type="ECO:0000255" key="1">
    <source>
        <dbReference type="HAMAP-Rule" id="MF_00182"/>
    </source>
</evidence>